<reference key="1">
    <citation type="journal article" date="2002" name="Proc. Natl. Acad. Sci. U.S.A.">
        <title>Complete genome sequence and comparative genomic analysis of an emerging human pathogen, serotype V Streptococcus agalactiae.</title>
        <authorList>
            <person name="Tettelin H."/>
            <person name="Masignani V."/>
            <person name="Cieslewicz M.J."/>
            <person name="Eisen J.A."/>
            <person name="Peterson S.N."/>
            <person name="Wessels M.R."/>
            <person name="Paulsen I.T."/>
            <person name="Nelson K.E."/>
            <person name="Margarit I."/>
            <person name="Read T.D."/>
            <person name="Madoff L.C."/>
            <person name="Wolf A.M."/>
            <person name="Beanan M.J."/>
            <person name="Brinkac L.M."/>
            <person name="Daugherty S.C."/>
            <person name="DeBoy R.T."/>
            <person name="Durkin A.S."/>
            <person name="Kolonay J.F."/>
            <person name="Madupu R."/>
            <person name="Lewis M.R."/>
            <person name="Radune D."/>
            <person name="Fedorova N.B."/>
            <person name="Scanlan D."/>
            <person name="Khouri H.M."/>
            <person name="Mulligan S."/>
            <person name="Carty H.A."/>
            <person name="Cline R.T."/>
            <person name="Van Aken S.E."/>
            <person name="Gill J."/>
            <person name="Scarselli M."/>
            <person name="Mora M."/>
            <person name="Iacobini E.T."/>
            <person name="Brettoni C."/>
            <person name="Galli G."/>
            <person name="Mariani M."/>
            <person name="Vegni F."/>
            <person name="Maione D."/>
            <person name="Rinaudo D."/>
            <person name="Rappuoli R."/>
            <person name="Telford J.L."/>
            <person name="Kasper D.L."/>
            <person name="Grandi G."/>
            <person name="Fraser C.M."/>
        </authorList>
    </citation>
    <scope>NUCLEOTIDE SEQUENCE [LARGE SCALE GENOMIC DNA]</scope>
    <source>
        <strain>ATCC BAA-611 / 2603 V/R</strain>
    </source>
</reference>
<feature type="chain" id="PRO_0000152203" description="NH(3)-dependent NAD(+) synthetase">
    <location>
        <begin position="1"/>
        <end position="273"/>
    </location>
</feature>
<feature type="binding site" evidence="1">
    <location>
        <begin position="46"/>
        <end position="53"/>
    </location>
    <ligand>
        <name>ATP</name>
        <dbReference type="ChEBI" id="CHEBI:30616"/>
    </ligand>
</feature>
<feature type="binding site" evidence="1">
    <location>
        <position position="52"/>
    </location>
    <ligand>
        <name>Mg(2+)</name>
        <dbReference type="ChEBI" id="CHEBI:18420"/>
    </ligand>
</feature>
<feature type="binding site" evidence="1">
    <location>
        <position position="139"/>
    </location>
    <ligand>
        <name>deamido-NAD(+)</name>
        <dbReference type="ChEBI" id="CHEBI:58437"/>
    </ligand>
</feature>
<feature type="binding site" evidence="1">
    <location>
        <position position="159"/>
    </location>
    <ligand>
        <name>ATP</name>
        <dbReference type="ChEBI" id="CHEBI:30616"/>
    </ligand>
</feature>
<feature type="binding site" evidence="1">
    <location>
        <position position="164"/>
    </location>
    <ligand>
        <name>Mg(2+)</name>
        <dbReference type="ChEBI" id="CHEBI:18420"/>
    </ligand>
</feature>
<feature type="binding site" evidence="1">
    <location>
        <position position="172"/>
    </location>
    <ligand>
        <name>deamido-NAD(+)</name>
        <dbReference type="ChEBI" id="CHEBI:58437"/>
    </ligand>
</feature>
<feature type="binding site" evidence="1">
    <location>
        <position position="179"/>
    </location>
    <ligand>
        <name>deamido-NAD(+)</name>
        <dbReference type="ChEBI" id="CHEBI:58437"/>
    </ligand>
</feature>
<feature type="binding site" evidence="1">
    <location>
        <position position="188"/>
    </location>
    <ligand>
        <name>ATP</name>
        <dbReference type="ChEBI" id="CHEBI:30616"/>
    </ligand>
</feature>
<feature type="binding site" evidence="1">
    <location>
        <position position="210"/>
    </location>
    <ligand>
        <name>ATP</name>
        <dbReference type="ChEBI" id="CHEBI:30616"/>
    </ligand>
</feature>
<feature type="binding site" evidence="1">
    <location>
        <begin position="259"/>
        <end position="260"/>
    </location>
    <ligand>
        <name>deamido-NAD(+)</name>
        <dbReference type="ChEBI" id="CHEBI:58437"/>
    </ligand>
</feature>
<name>NADE_STRA5</name>
<evidence type="ECO:0000255" key="1">
    <source>
        <dbReference type="HAMAP-Rule" id="MF_00193"/>
    </source>
</evidence>
<keyword id="KW-0067">ATP-binding</keyword>
<keyword id="KW-0436">Ligase</keyword>
<keyword id="KW-0460">Magnesium</keyword>
<keyword id="KW-0479">Metal-binding</keyword>
<keyword id="KW-0520">NAD</keyword>
<keyword id="KW-0547">Nucleotide-binding</keyword>
<keyword id="KW-1185">Reference proteome</keyword>
<organism>
    <name type="scientific">Streptococcus agalactiae serotype V (strain ATCC BAA-611 / 2603 V/R)</name>
    <dbReference type="NCBI Taxonomy" id="208435"/>
    <lineage>
        <taxon>Bacteria</taxon>
        <taxon>Bacillati</taxon>
        <taxon>Bacillota</taxon>
        <taxon>Bacilli</taxon>
        <taxon>Lactobacillales</taxon>
        <taxon>Streptococcaceae</taxon>
        <taxon>Streptococcus</taxon>
    </lineage>
</organism>
<gene>
    <name evidence="1" type="primary">nadE</name>
    <name type="ordered locus">SAG0296</name>
</gene>
<sequence>MTLQDQIIKELGVKPVINPSQEIRRSVEFLKDYLLKHSFLKTYVLGISGGQDSTLAGRLAQLAVEELRADTGENYQFIAIRLPYGIQADEEDAQKALDFIKPDIALTINIKEAVDGQVRALNAAGVEITDFNKGNIKARQRMISQYAVAGQYAGAVIGTDHAAENITGFFTKFGDGGADLLPLFRLNKSQGKQLLAELGADKALYEKIPTADLEENKPGIADEIALGVTYQEIDAYLEGKVVSDKSRGIIENWWYKGQHKRHLPITIFDDFWK</sequence>
<comment type="function">
    <text evidence="1">Catalyzes the ATP-dependent amidation of deamido-NAD to form NAD. Uses ammonia as a nitrogen source.</text>
</comment>
<comment type="catalytic activity">
    <reaction evidence="1">
        <text>deamido-NAD(+) + NH4(+) + ATP = AMP + diphosphate + NAD(+) + H(+)</text>
        <dbReference type="Rhea" id="RHEA:21188"/>
        <dbReference type="ChEBI" id="CHEBI:15378"/>
        <dbReference type="ChEBI" id="CHEBI:28938"/>
        <dbReference type="ChEBI" id="CHEBI:30616"/>
        <dbReference type="ChEBI" id="CHEBI:33019"/>
        <dbReference type="ChEBI" id="CHEBI:57540"/>
        <dbReference type="ChEBI" id="CHEBI:58437"/>
        <dbReference type="ChEBI" id="CHEBI:456215"/>
        <dbReference type="EC" id="6.3.1.5"/>
    </reaction>
</comment>
<comment type="pathway">
    <text evidence="1">Cofactor biosynthesis; NAD(+) biosynthesis; NAD(+) from deamido-NAD(+) (ammonia route): step 1/1.</text>
</comment>
<comment type="subunit">
    <text evidence="1">Homodimer.</text>
</comment>
<comment type="similarity">
    <text evidence="1">Belongs to the NAD synthetase family.</text>
</comment>
<proteinExistence type="inferred from homology"/>
<protein>
    <recommendedName>
        <fullName evidence="1">NH(3)-dependent NAD(+) synthetase</fullName>
        <ecNumber evidence="1">6.3.1.5</ecNumber>
    </recommendedName>
</protein>
<accession>Q8E1Q7</accession>
<dbReference type="EC" id="6.3.1.5" evidence="1"/>
<dbReference type="EMBL" id="AE009948">
    <property type="protein sequence ID" value="AAM99203.1"/>
    <property type="molecule type" value="Genomic_DNA"/>
</dbReference>
<dbReference type="RefSeq" id="NP_687331.1">
    <property type="nucleotide sequence ID" value="NC_004116.1"/>
</dbReference>
<dbReference type="RefSeq" id="WP_000174854.1">
    <property type="nucleotide sequence ID" value="NC_004116.1"/>
</dbReference>
<dbReference type="SMR" id="Q8E1Q7"/>
<dbReference type="STRING" id="208435.SAG0296"/>
<dbReference type="KEGG" id="sag:SAG0296"/>
<dbReference type="PATRIC" id="fig|208435.3.peg.294"/>
<dbReference type="HOGENOM" id="CLU_059327_3_0_9"/>
<dbReference type="OrthoDB" id="9803818at2"/>
<dbReference type="UniPathway" id="UPA00253">
    <property type="reaction ID" value="UER00333"/>
</dbReference>
<dbReference type="Proteomes" id="UP000000821">
    <property type="component" value="Chromosome"/>
</dbReference>
<dbReference type="GO" id="GO:0005737">
    <property type="term" value="C:cytoplasm"/>
    <property type="evidence" value="ECO:0007669"/>
    <property type="project" value="InterPro"/>
</dbReference>
<dbReference type="GO" id="GO:0005524">
    <property type="term" value="F:ATP binding"/>
    <property type="evidence" value="ECO:0007669"/>
    <property type="project" value="UniProtKB-UniRule"/>
</dbReference>
<dbReference type="GO" id="GO:0004359">
    <property type="term" value="F:glutaminase activity"/>
    <property type="evidence" value="ECO:0007669"/>
    <property type="project" value="InterPro"/>
</dbReference>
<dbReference type="GO" id="GO:0046872">
    <property type="term" value="F:metal ion binding"/>
    <property type="evidence" value="ECO:0007669"/>
    <property type="project" value="UniProtKB-KW"/>
</dbReference>
<dbReference type="GO" id="GO:0003952">
    <property type="term" value="F:NAD+ synthase (glutamine-hydrolyzing) activity"/>
    <property type="evidence" value="ECO:0007669"/>
    <property type="project" value="InterPro"/>
</dbReference>
<dbReference type="GO" id="GO:0008795">
    <property type="term" value="F:NAD+ synthase activity"/>
    <property type="evidence" value="ECO:0007669"/>
    <property type="project" value="UniProtKB-UniRule"/>
</dbReference>
<dbReference type="GO" id="GO:0009435">
    <property type="term" value="P:NAD biosynthetic process"/>
    <property type="evidence" value="ECO:0007669"/>
    <property type="project" value="UniProtKB-UniRule"/>
</dbReference>
<dbReference type="CDD" id="cd00553">
    <property type="entry name" value="NAD_synthase"/>
    <property type="match status" value="1"/>
</dbReference>
<dbReference type="FunFam" id="3.40.50.620:FF:000015">
    <property type="entry name" value="NH(3)-dependent NAD(+) synthetase"/>
    <property type="match status" value="1"/>
</dbReference>
<dbReference type="Gene3D" id="3.40.50.620">
    <property type="entry name" value="HUPs"/>
    <property type="match status" value="1"/>
</dbReference>
<dbReference type="HAMAP" id="MF_00193">
    <property type="entry name" value="NadE_ammonia_dep"/>
    <property type="match status" value="1"/>
</dbReference>
<dbReference type="InterPro" id="IPR022310">
    <property type="entry name" value="NAD/GMP_synthase"/>
</dbReference>
<dbReference type="InterPro" id="IPR003694">
    <property type="entry name" value="NAD_synthase"/>
</dbReference>
<dbReference type="InterPro" id="IPR022926">
    <property type="entry name" value="NH(3)-dep_NAD(+)_synth"/>
</dbReference>
<dbReference type="InterPro" id="IPR014729">
    <property type="entry name" value="Rossmann-like_a/b/a_fold"/>
</dbReference>
<dbReference type="NCBIfam" id="TIGR00552">
    <property type="entry name" value="nadE"/>
    <property type="match status" value="1"/>
</dbReference>
<dbReference type="NCBIfam" id="NF001979">
    <property type="entry name" value="PRK00768.1"/>
    <property type="match status" value="1"/>
</dbReference>
<dbReference type="PANTHER" id="PTHR23090">
    <property type="entry name" value="NH 3 /GLUTAMINE-DEPENDENT NAD + SYNTHETASE"/>
    <property type="match status" value="1"/>
</dbReference>
<dbReference type="PANTHER" id="PTHR23090:SF7">
    <property type="entry name" value="NH(3)-DEPENDENT NAD(+) SYNTHETASE"/>
    <property type="match status" value="1"/>
</dbReference>
<dbReference type="Pfam" id="PF02540">
    <property type="entry name" value="NAD_synthase"/>
    <property type="match status" value="1"/>
</dbReference>
<dbReference type="SUPFAM" id="SSF52402">
    <property type="entry name" value="Adenine nucleotide alpha hydrolases-like"/>
    <property type="match status" value="1"/>
</dbReference>